<reference key="1">
    <citation type="journal article" date="2010" name="J. Bacteriol.">
        <title>Complete genome sequence of the aerobic facultative methanotroph Methylocella silvestris BL2.</title>
        <authorList>
            <person name="Chen Y."/>
            <person name="Crombie A."/>
            <person name="Rahman M.T."/>
            <person name="Dedysh S.N."/>
            <person name="Liesack W."/>
            <person name="Stott M.B."/>
            <person name="Alam M."/>
            <person name="Theisen A.R."/>
            <person name="Murrell J.C."/>
            <person name="Dunfield P.F."/>
        </authorList>
    </citation>
    <scope>NUCLEOTIDE SEQUENCE [LARGE SCALE GENOMIC DNA]</scope>
    <source>
        <strain>DSM 15510 / CIP 108128 / LMG 27833 / NCIMB 13906 / BL2</strain>
    </source>
</reference>
<feature type="chain" id="PRO_1000132522" description="Potassium-transporting ATPase KdpC subunit">
    <location>
        <begin position="1"/>
        <end position="200"/>
    </location>
</feature>
<feature type="transmembrane region" description="Helical" evidence="1">
    <location>
        <begin position="7"/>
        <end position="27"/>
    </location>
</feature>
<sequence>MIAQIRPALVMIVLFTILTGLIYPLAMTGVAKALFPAAAEGSLITRNGQVVGSALIGQNFTSDRYFHGRPSATTTADPNDASKTIPAPYNAANSAGSNLGPTNSALIDRVKTDAEALKAENPSQPVPIDLVTTSGSGLDPHLSPEAALFQVPRVAKARGLSEDALRRLVSEHVEGRLLGVLGEPRVNVLALNLALDESGK</sequence>
<dbReference type="EMBL" id="CP001280">
    <property type="protein sequence ID" value="ACK51742.1"/>
    <property type="molecule type" value="Genomic_DNA"/>
</dbReference>
<dbReference type="RefSeq" id="WP_012591811.1">
    <property type="nucleotide sequence ID" value="NC_011666.1"/>
</dbReference>
<dbReference type="SMR" id="B8ETA0"/>
<dbReference type="STRING" id="395965.Msil_2824"/>
<dbReference type="KEGG" id="msl:Msil_2824"/>
<dbReference type="eggNOG" id="COG2156">
    <property type="taxonomic scope" value="Bacteria"/>
</dbReference>
<dbReference type="HOGENOM" id="CLU_077094_2_0_5"/>
<dbReference type="OrthoDB" id="9788285at2"/>
<dbReference type="Proteomes" id="UP000002257">
    <property type="component" value="Chromosome"/>
</dbReference>
<dbReference type="GO" id="GO:0005886">
    <property type="term" value="C:plasma membrane"/>
    <property type="evidence" value="ECO:0007669"/>
    <property type="project" value="UniProtKB-SubCell"/>
</dbReference>
<dbReference type="GO" id="GO:0005524">
    <property type="term" value="F:ATP binding"/>
    <property type="evidence" value="ECO:0007669"/>
    <property type="project" value="UniProtKB-UniRule"/>
</dbReference>
<dbReference type="GO" id="GO:0008556">
    <property type="term" value="F:P-type potassium transmembrane transporter activity"/>
    <property type="evidence" value="ECO:0007669"/>
    <property type="project" value="InterPro"/>
</dbReference>
<dbReference type="HAMAP" id="MF_00276">
    <property type="entry name" value="KdpC"/>
    <property type="match status" value="1"/>
</dbReference>
<dbReference type="InterPro" id="IPR003820">
    <property type="entry name" value="KdpC"/>
</dbReference>
<dbReference type="NCBIfam" id="TIGR00681">
    <property type="entry name" value="kdpC"/>
    <property type="match status" value="1"/>
</dbReference>
<dbReference type="NCBIfam" id="NF001454">
    <property type="entry name" value="PRK00315.1"/>
    <property type="match status" value="1"/>
</dbReference>
<dbReference type="NCBIfam" id="NF010603">
    <property type="entry name" value="PRK13999.1"/>
    <property type="match status" value="1"/>
</dbReference>
<dbReference type="PANTHER" id="PTHR30042">
    <property type="entry name" value="POTASSIUM-TRANSPORTING ATPASE C CHAIN"/>
    <property type="match status" value="1"/>
</dbReference>
<dbReference type="PANTHER" id="PTHR30042:SF2">
    <property type="entry name" value="POTASSIUM-TRANSPORTING ATPASE KDPC SUBUNIT"/>
    <property type="match status" value="1"/>
</dbReference>
<dbReference type="Pfam" id="PF02669">
    <property type="entry name" value="KdpC"/>
    <property type="match status" value="1"/>
</dbReference>
<dbReference type="PIRSF" id="PIRSF001296">
    <property type="entry name" value="K_ATPase_KdpC"/>
    <property type="match status" value="1"/>
</dbReference>
<accession>B8ETA0</accession>
<name>KDPC_METSB</name>
<protein>
    <recommendedName>
        <fullName evidence="1">Potassium-transporting ATPase KdpC subunit</fullName>
    </recommendedName>
    <alternativeName>
        <fullName evidence="1">ATP phosphohydrolase [potassium-transporting] C chain</fullName>
    </alternativeName>
    <alternativeName>
        <fullName evidence="1">Potassium-binding and translocating subunit C</fullName>
    </alternativeName>
    <alternativeName>
        <fullName evidence="1">Potassium-translocating ATPase C chain</fullName>
    </alternativeName>
</protein>
<proteinExistence type="inferred from homology"/>
<gene>
    <name evidence="1" type="primary">kdpC</name>
    <name type="ordered locus">Msil_2824</name>
</gene>
<comment type="function">
    <text evidence="1">Part of the high-affinity ATP-driven potassium transport (or Kdp) system, which catalyzes the hydrolysis of ATP coupled with the electrogenic transport of potassium into the cytoplasm. This subunit acts as a catalytic chaperone that increases the ATP-binding affinity of the ATP-hydrolyzing subunit KdpB by the formation of a transient KdpB/KdpC/ATP ternary complex.</text>
</comment>
<comment type="subunit">
    <text evidence="1">The system is composed of three essential subunits: KdpA, KdpB and KdpC.</text>
</comment>
<comment type="subcellular location">
    <subcellularLocation>
        <location evidence="1">Cell inner membrane</location>
        <topology evidence="1">Single-pass membrane protein</topology>
    </subcellularLocation>
</comment>
<comment type="similarity">
    <text evidence="1">Belongs to the KdpC family.</text>
</comment>
<evidence type="ECO:0000255" key="1">
    <source>
        <dbReference type="HAMAP-Rule" id="MF_00276"/>
    </source>
</evidence>
<organism>
    <name type="scientific">Methylocella silvestris (strain DSM 15510 / CIP 108128 / LMG 27833 / NCIMB 13906 / BL2)</name>
    <dbReference type="NCBI Taxonomy" id="395965"/>
    <lineage>
        <taxon>Bacteria</taxon>
        <taxon>Pseudomonadati</taxon>
        <taxon>Pseudomonadota</taxon>
        <taxon>Alphaproteobacteria</taxon>
        <taxon>Hyphomicrobiales</taxon>
        <taxon>Beijerinckiaceae</taxon>
        <taxon>Methylocella</taxon>
    </lineage>
</organism>
<keyword id="KW-0067">ATP-binding</keyword>
<keyword id="KW-0997">Cell inner membrane</keyword>
<keyword id="KW-1003">Cell membrane</keyword>
<keyword id="KW-0406">Ion transport</keyword>
<keyword id="KW-0472">Membrane</keyword>
<keyword id="KW-0547">Nucleotide-binding</keyword>
<keyword id="KW-0630">Potassium</keyword>
<keyword id="KW-0633">Potassium transport</keyword>
<keyword id="KW-1185">Reference proteome</keyword>
<keyword id="KW-0812">Transmembrane</keyword>
<keyword id="KW-1133">Transmembrane helix</keyword>
<keyword id="KW-0813">Transport</keyword>